<feature type="chain" id="PRO_1000114910" description="Phenylalanine--tRNA ligase alpha subunit">
    <location>
        <begin position="1"/>
        <end position="327"/>
    </location>
</feature>
<feature type="binding site" evidence="1">
    <location>
        <position position="252"/>
    </location>
    <ligand>
        <name>Mg(2+)</name>
        <dbReference type="ChEBI" id="CHEBI:18420"/>
        <note>shared with beta subunit</note>
    </ligand>
</feature>
<sequence length="327" mass="36755">MSHLAELVANAAAAINQASDVAALDNVRVEYLGKKGHLTLQMTTLRDLPPEERPAAGAVINAAKEQVQQALNARKAELESAALNARLAAETIDISLPGRRIENGGLHPVTRTIDRIESFFGELGFTVATGPEIEDDYHNFDALNIPGHHPARADHDTFWFDATRLLRTQTSGVQIRTMKAQQPPIRIIAPGRVYRNDYDQTHTPMFHQMEGLIVDTNISFTNLKGTLHDFLRNFFEEDLQIRFRPSYFPFTEPSAEVDVMGKNGKWLEVLGCGMVHPNVLRNVGIDPEIYSGFAFGMGMERLTMLRYGVTDLRSFFENDLRFLKQFK</sequence>
<evidence type="ECO:0000255" key="1">
    <source>
        <dbReference type="HAMAP-Rule" id="MF_00281"/>
    </source>
</evidence>
<keyword id="KW-0030">Aminoacyl-tRNA synthetase</keyword>
<keyword id="KW-0067">ATP-binding</keyword>
<keyword id="KW-0963">Cytoplasm</keyword>
<keyword id="KW-0436">Ligase</keyword>
<keyword id="KW-0460">Magnesium</keyword>
<keyword id="KW-0479">Metal-binding</keyword>
<keyword id="KW-0547">Nucleotide-binding</keyword>
<keyword id="KW-0648">Protein biosynthesis</keyword>
<comment type="catalytic activity">
    <reaction evidence="1">
        <text>tRNA(Phe) + L-phenylalanine + ATP = L-phenylalanyl-tRNA(Phe) + AMP + diphosphate + H(+)</text>
        <dbReference type="Rhea" id="RHEA:19413"/>
        <dbReference type="Rhea" id="RHEA-COMP:9668"/>
        <dbReference type="Rhea" id="RHEA-COMP:9699"/>
        <dbReference type="ChEBI" id="CHEBI:15378"/>
        <dbReference type="ChEBI" id="CHEBI:30616"/>
        <dbReference type="ChEBI" id="CHEBI:33019"/>
        <dbReference type="ChEBI" id="CHEBI:58095"/>
        <dbReference type="ChEBI" id="CHEBI:78442"/>
        <dbReference type="ChEBI" id="CHEBI:78531"/>
        <dbReference type="ChEBI" id="CHEBI:456215"/>
        <dbReference type="EC" id="6.1.1.20"/>
    </reaction>
</comment>
<comment type="cofactor">
    <cofactor evidence="1">
        <name>Mg(2+)</name>
        <dbReference type="ChEBI" id="CHEBI:18420"/>
    </cofactor>
    <text evidence="1">Binds 2 magnesium ions per tetramer.</text>
</comment>
<comment type="subunit">
    <text evidence="1">Tetramer of two alpha and two beta subunits.</text>
</comment>
<comment type="subcellular location">
    <subcellularLocation>
        <location evidence="1">Cytoplasm</location>
    </subcellularLocation>
</comment>
<comment type="similarity">
    <text evidence="1">Belongs to the class-II aminoacyl-tRNA synthetase family. Phe-tRNA synthetase alpha subunit type 1 subfamily.</text>
</comment>
<name>SYFA_SALEP</name>
<dbReference type="EC" id="6.1.1.20" evidence="1"/>
<dbReference type="EMBL" id="AM933172">
    <property type="protein sequence ID" value="CAR33289.1"/>
    <property type="molecule type" value="Genomic_DNA"/>
</dbReference>
<dbReference type="RefSeq" id="WP_000018570.1">
    <property type="nucleotide sequence ID" value="NC_011294.1"/>
</dbReference>
<dbReference type="SMR" id="B5QVW4"/>
<dbReference type="KEGG" id="set:SEN1707"/>
<dbReference type="HOGENOM" id="CLU_025086_0_1_6"/>
<dbReference type="Proteomes" id="UP000000613">
    <property type="component" value="Chromosome"/>
</dbReference>
<dbReference type="GO" id="GO:0005737">
    <property type="term" value="C:cytoplasm"/>
    <property type="evidence" value="ECO:0007669"/>
    <property type="project" value="UniProtKB-SubCell"/>
</dbReference>
<dbReference type="GO" id="GO:0005524">
    <property type="term" value="F:ATP binding"/>
    <property type="evidence" value="ECO:0007669"/>
    <property type="project" value="UniProtKB-UniRule"/>
</dbReference>
<dbReference type="GO" id="GO:0000287">
    <property type="term" value="F:magnesium ion binding"/>
    <property type="evidence" value="ECO:0007669"/>
    <property type="project" value="UniProtKB-UniRule"/>
</dbReference>
<dbReference type="GO" id="GO:0004826">
    <property type="term" value="F:phenylalanine-tRNA ligase activity"/>
    <property type="evidence" value="ECO:0007669"/>
    <property type="project" value="UniProtKB-UniRule"/>
</dbReference>
<dbReference type="GO" id="GO:0000049">
    <property type="term" value="F:tRNA binding"/>
    <property type="evidence" value="ECO:0007669"/>
    <property type="project" value="InterPro"/>
</dbReference>
<dbReference type="GO" id="GO:0006432">
    <property type="term" value="P:phenylalanyl-tRNA aminoacylation"/>
    <property type="evidence" value="ECO:0007669"/>
    <property type="project" value="UniProtKB-UniRule"/>
</dbReference>
<dbReference type="CDD" id="cd00496">
    <property type="entry name" value="PheRS_alpha_core"/>
    <property type="match status" value="1"/>
</dbReference>
<dbReference type="FunFam" id="3.30.930.10:FF:000003">
    <property type="entry name" value="Phenylalanine--tRNA ligase alpha subunit"/>
    <property type="match status" value="1"/>
</dbReference>
<dbReference type="Gene3D" id="3.30.930.10">
    <property type="entry name" value="Bira Bifunctional Protein, Domain 2"/>
    <property type="match status" value="1"/>
</dbReference>
<dbReference type="HAMAP" id="MF_00281">
    <property type="entry name" value="Phe_tRNA_synth_alpha1"/>
    <property type="match status" value="1"/>
</dbReference>
<dbReference type="InterPro" id="IPR006195">
    <property type="entry name" value="aa-tRNA-synth_II"/>
</dbReference>
<dbReference type="InterPro" id="IPR045864">
    <property type="entry name" value="aa-tRNA-synth_II/BPL/LPL"/>
</dbReference>
<dbReference type="InterPro" id="IPR004529">
    <property type="entry name" value="Phe-tRNA-synth_IIc_asu"/>
</dbReference>
<dbReference type="InterPro" id="IPR004188">
    <property type="entry name" value="Phe-tRNA_ligase_II_N"/>
</dbReference>
<dbReference type="InterPro" id="IPR022911">
    <property type="entry name" value="Phe_tRNA_ligase_alpha1_bac"/>
</dbReference>
<dbReference type="InterPro" id="IPR002319">
    <property type="entry name" value="Phenylalanyl-tRNA_Synthase"/>
</dbReference>
<dbReference type="InterPro" id="IPR010978">
    <property type="entry name" value="tRNA-bd_arm"/>
</dbReference>
<dbReference type="NCBIfam" id="TIGR00468">
    <property type="entry name" value="pheS"/>
    <property type="match status" value="1"/>
</dbReference>
<dbReference type="PANTHER" id="PTHR11538:SF41">
    <property type="entry name" value="PHENYLALANINE--TRNA LIGASE, MITOCHONDRIAL"/>
    <property type="match status" value="1"/>
</dbReference>
<dbReference type="PANTHER" id="PTHR11538">
    <property type="entry name" value="PHENYLALANYL-TRNA SYNTHETASE"/>
    <property type="match status" value="1"/>
</dbReference>
<dbReference type="Pfam" id="PF02912">
    <property type="entry name" value="Phe_tRNA-synt_N"/>
    <property type="match status" value="1"/>
</dbReference>
<dbReference type="Pfam" id="PF01409">
    <property type="entry name" value="tRNA-synt_2d"/>
    <property type="match status" value="1"/>
</dbReference>
<dbReference type="SUPFAM" id="SSF55681">
    <property type="entry name" value="Class II aaRS and biotin synthetases"/>
    <property type="match status" value="1"/>
</dbReference>
<dbReference type="SUPFAM" id="SSF46589">
    <property type="entry name" value="tRNA-binding arm"/>
    <property type="match status" value="1"/>
</dbReference>
<dbReference type="PROSITE" id="PS50862">
    <property type="entry name" value="AA_TRNA_LIGASE_II"/>
    <property type="match status" value="1"/>
</dbReference>
<organism>
    <name type="scientific">Salmonella enteritidis PT4 (strain P125109)</name>
    <dbReference type="NCBI Taxonomy" id="550537"/>
    <lineage>
        <taxon>Bacteria</taxon>
        <taxon>Pseudomonadati</taxon>
        <taxon>Pseudomonadota</taxon>
        <taxon>Gammaproteobacteria</taxon>
        <taxon>Enterobacterales</taxon>
        <taxon>Enterobacteriaceae</taxon>
        <taxon>Salmonella</taxon>
    </lineage>
</organism>
<protein>
    <recommendedName>
        <fullName evidence="1">Phenylalanine--tRNA ligase alpha subunit</fullName>
        <ecNumber evidence="1">6.1.1.20</ecNumber>
    </recommendedName>
    <alternativeName>
        <fullName evidence="1">Phenylalanyl-tRNA synthetase alpha subunit</fullName>
        <shortName evidence="1">PheRS</shortName>
    </alternativeName>
</protein>
<accession>B5QVW4</accession>
<reference key="1">
    <citation type="journal article" date="2008" name="Genome Res.">
        <title>Comparative genome analysis of Salmonella enteritidis PT4 and Salmonella gallinarum 287/91 provides insights into evolutionary and host adaptation pathways.</title>
        <authorList>
            <person name="Thomson N.R."/>
            <person name="Clayton D.J."/>
            <person name="Windhorst D."/>
            <person name="Vernikos G."/>
            <person name="Davidson S."/>
            <person name="Churcher C."/>
            <person name="Quail M.A."/>
            <person name="Stevens M."/>
            <person name="Jones M.A."/>
            <person name="Watson M."/>
            <person name="Barron A."/>
            <person name="Layton A."/>
            <person name="Pickard D."/>
            <person name="Kingsley R.A."/>
            <person name="Bignell A."/>
            <person name="Clark L."/>
            <person name="Harris B."/>
            <person name="Ormond D."/>
            <person name="Abdellah Z."/>
            <person name="Brooks K."/>
            <person name="Cherevach I."/>
            <person name="Chillingworth T."/>
            <person name="Woodward J."/>
            <person name="Norberczak H."/>
            <person name="Lord A."/>
            <person name="Arrowsmith C."/>
            <person name="Jagels K."/>
            <person name="Moule S."/>
            <person name="Mungall K."/>
            <person name="Saunders M."/>
            <person name="Whitehead S."/>
            <person name="Chabalgoity J.A."/>
            <person name="Maskell D."/>
            <person name="Humphreys T."/>
            <person name="Roberts M."/>
            <person name="Barrow P.A."/>
            <person name="Dougan G."/>
            <person name="Parkhill J."/>
        </authorList>
    </citation>
    <scope>NUCLEOTIDE SEQUENCE [LARGE SCALE GENOMIC DNA]</scope>
    <source>
        <strain>P125109</strain>
    </source>
</reference>
<gene>
    <name evidence="1" type="primary">pheS</name>
    <name type="ordered locus">SEN1707</name>
</gene>
<proteinExistence type="inferred from homology"/>